<sequence>MKKKRVILAYSGGLDTSIIVRWLTEKGYEVITYTADVGQGEELSEIPEKARRAGAIEAIVEDLKETFAENYCLPTLRALALYEGKYPLTAALSRPLIAERLVYYAEKFNADYVAHGSTGKGNDQVRFELSVWALNPDIEVLAPVREWEFKSREEQVEYAQRFNIPVKATKEKPYSIDRNLWGVSIECGPLEDPWQEPPQDAYQITQSPEEAPDEPEYVTVGFEKGKPVYLNGERYEEQWKLIANLNEIAGRHGVGRIDMVENRLVGIKSREIYEAPGAMVLYEAYRDLLSLVLDRFTFHYFLTHIPHEYAKLVYEGLWFTPLREALDAFTNKIAEFATGEVRLKLYKGSVSVVGRRSPNSLYVEELATYSEKDQFDQIAGKHFTKVWGLPLKVLGRVRKGK</sequence>
<accession>O67213</accession>
<comment type="catalytic activity">
    <reaction evidence="1">
        <text>L-citrulline + L-aspartate + ATP = 2-(N(omega)-L-arginino)succinate + AMP + diphosphate + H(+)</text>
        <dbReference type="Rhea" id="RHEA:10932"/>
        <dbReference type="ChEBI" id="CHEBI:15378"/>
        <dbReference type="ChEBI" id="CHEBI:29991"/>
        <dbReference type="ChEBI" id="CHEBI:30616"/>
        <dbReference type="ChEBI" id="CHEBI:33019"/>
        <dbReference type="ChEBI" id="CHEBI:57472"/>
        <dbReference type="ChEBI" id="CHEBI:57743"/>
        <dbReference type="ChEBI" id="CHEBI:456215"/>
        <dbReference type="EC" id="6.3.4.5"/>
    </reaction>
</comment>
<comment type="pathway">
    <text evidence="1">Amino-acid biosynthesis; L-arginine biosynthesis; L-arginine from L-ornithine and carbamoyl phosphate: step 2/3.</text>
</comment>
<comment type="subunit">
    <text evidence="1">Homotetramer.</text>
</comment>
<comment type="subcellular location">
    <subcellularLocation>
        <location evidence="1">Cytoplasm</location>
    </subcellularLocation>
</comment>
<comment type="similarity">
    <text evidence="1">Belongs to the argininosuccinate synthase family. Type 1 subfamily.</text>
</comment>
<evidence type="ECO:0000255" key="1">
    <source>
        <dbReference type="HAMAP-Rule" id="MF_00005"/>
    </source>
</evidence>
<reference key="1">
    <citation type="journal article" date="1998" name="Nature">
        <title>The complete genome of the hyperthermophilic bacterium Aquifex aeolicus.</title>
        <authorList>
            <person name="Deckert G."/>
            <person name="Warren P.V."/>
            <person name="Gaasterland T."/>
            <person name="Young W.G."/>
            <person name="Lenox A.L."/>
            <person name="Graham D.E."/>
            <person name="Overbeek R."/>
            <person name="Snead M.A."/>
            <person name="Keller M."/>
            <person name="Aujay M."/>
            <person name="Huber R."/>
            <person name="Feldman R.A."/>
            <person name="Short J.M."/>
            <person name="Olsen G.J."/>
            <person name="Swanson R.V."/>
        </authorList>
    </citation>
    <scope>NUCLEOTIDE SEQUENCE [LARGE SCALE GENOMIC DNA]</scope>
    <source>
        <strain>VF5</strain>
    </source>
</reference>
<keyword id="KW-0028">Amino-acid biosynthesis</keyword>
<keyword id="KW-0055">Arginine biosynthesis</keyword>
<keyword id="KW-0067">ATP-binding</keyword>
<keyword id="KW-0963">Cytoplasm</keyword>
<keyword id="KW-0436">Ligase</keyword>
<keyword id="KW-0547">Nucleotide-binding</keyword>
<keyword id="KW-1185">Reference proteome</keyword>
<proteinExistence type="inferred from homology"/>
<gene>
    <name evidence="1" type="primary">argG</name>
    <name type="ordered locus">aq_1140</name>
</gene>
<organism>
    <name type="scientific">Aquifex aeolicus (strain VF5)</name>
    <dbReference type="NCBI Taxonomy" id="224324"/>
    <lineage>
        <taxon>Bacteria</taxon>
        <taxon>Pseudomonadati</taxon>
        <taxon>Aquificota</taxon>
        <taxon>Aquificia</taxon>
        <taxon>Aquificales</taxon>
        <taxon>Aquificaceae</taxon>
        <taxon>Aquifex</taxon>
    </lineage>
</organism>
<dbReference type="EC" id="6.3.4.5" evidence="1"/>
<dbReference type="EMBL" id="AE000657">
    <property type="protein sequence ID" value="AAC07170.1"/>
    <property type="molecule type" value="Genomic_DNA"/>
</dbReference>
<dbReference type="PIR" id="B70398">
    <property type="entry name" value="B70398"/>
</dbReference>
<dbReference type="RefSeq" id="NP_213777.1">
    <property type="nucleotide sequence ID" value="NC_000918.1"/>
</dbReference>
<dbReference type="RefSeq" id="WP_010880715.1">
    <property type="nucleotide sequence ID" value="NC_000918.1"/>
</dbReference>
<dbReference type="SMR" id="O67213"/>
<dbReference type="FunCoup" id="O67213">
    <property type="interactions" value="400"/>
</dbReference>
<dbReference type="STRING" id="224324.aq_1140"/>
<dbReference type="EnsemblBacteria" id="AAC07170">
    <property type="protein sequence ID" value="AAC07170"/>
    <property type="gene ID" value="aq_1140"/>
</dbReference>
<dbReference type="KEGG" id="aae:aq_1140"/>
<dbReference type="PATRIC" id="fig|224324.8.peg.888"/>
<dbReference type="eggNOG" id="COG0137">
    <property type="taxonomic scope" value="Bacteria"/>
</dbReference>
<dbReference type="HOGENOM" id="CLU_032784_4_2_0"/>
<dbReference type="InParanoid" id="O67213"/>
<dbReference type="OrthoDB" id="9801641at2"/>
<dbReference type="UniPathway" id="UPA00068">
    <property type="reaction ID" value="UER00113"/>
</dbReference>
<dbReference type="Proteomes" id="UP000000798">
    <property type="component" value="Chromosome"/>
</dbReference>
<dbReference type="GO" id="GO:0005737">
    <property type="term" value="C:cytoplasm"/>
    <property type="evidence" value="ECO:0000318"/>
    <property type="project" value="GO_Central"/>
</dbReference>
<dbReference type="GO" id="GO:0004055">
    <property type="term" value="F:argininosuccinate synthase activity"/>
    <property type="evidence" value="ECO:0000318"/>
    <property type="project" value="GO_Central"/>
</dbReference>
<dbReference type="GO" id="GO:0005524">
    <property type="term" value="F:ATP binding"/>
    <property type="evidence" value="ECO:0007669"/>
    <property type="project" value="UniProtKB-UniRule"/>
</dbReference>
<dbReference type="GO" id="GO:0000053">
    <property type="term" value="P:argininosuccinate metabolic process"/>
    <property type="evidence" value="ECO:0000318"/>
    <property type="project" value="GO_Central"/>
</dbReference>
<dbReference type="GO" id="GO:0006526">
    <property type="term" value="P:L-arginine biosynthetic process"/>
    <property type="evidence" value="ECO:0000318"/>
    <property type="project" value="GO_Central"/>
</dbReference>
<dbReference type="GO" id="GO:0000050">
    <property type="term" value="P:urea cycle"/>
    <property type="evidence" value="ECO:0000318"/>
    <property type="project" value="GO_Central"/>
</dbReference>
<dbReference type="CDD" id="cd01999">
    <property type="entry name" value="ASS"/>
    <property type="match status" value="1"/>
</dbReference>
<dbReference type="FunFam" id="3.40.50.620:FF:000019">
    <property type="entry name" value="Argininosuccinate synthase"/>
    <property type="match status" value="1"/>
</dbReference>
<dbReference type="FunFam" id="3.90.1260.10:FF:000007">
    <property type="entry name" value="Argininosuccinate synthase"/>
    <property type="match status" value="1"/>
</dbReference>
<dbReference type="Gene3D" id="3.90.1260.10">
    <property type="entry name" value="Argininosuccinate synthetase, chain A, domain 2"/>
    <property type="match status" value="1"/>
</dbReference>
<dbReference type="Gene3D" id="3.40.50.620">
    <property type="entry name" value="HUPs"/>
    <property type="match status" value="1"/>
</dbReference>
<dbReference type="Gene3D" id="1.20.5.470">
    <property type="entry name" value="Single helix bin"/>
    <property type="match status" value="1"/>
</dbReference>
<dbReference type="HAMAP" id="MF_00005">
    <property type="entry name" value="Arg_succ_synth_type1"/>
    <property type="match status" value="1"/>
</dbReference>
<dbReference type="InterPro" id="IPR048268">
    <property type="entry name" value="Arginosuc_syn_C"/>
</dbReference>
<dbReference type="InterPro" id="IPR048267">
    <property type="entry name" value="Arginosuc_syn_N"/>
</dbReference>
<dbReference type="InterPro" id="IPR001518">
    <property type="entry name" value="Arginosuc_synth"/>
</dbReference>
<dbReference type="InterPro" id="IPR018223">
    <property type="entry name" value="Arginosuc_synth_CS"/>
</dbReference>
<dbReference type="InterPro" id="IPR023434">
    <property type="entry name" value="Arginosuc_synth_type_1_subfam"/>
</dbReference>
<dbReference type="InterPro" id="IPR024074">
    <property type="entry name" value="AS_cat/multimer_dom_body"/>
</dbReference>
<dbReference type="InterPro" id="IPR014729">
    <property type="entry name" value="Rossmann-like_a/b/a_fold"/>
</dbReference>
<dbReference type="NCBIfam" id="TIGR00032">
    <property type="entry name" value="argG"/>
    <property type="match status" value="1"/>
</dbReference>
<dbReference type="NCBIfam" id="NF001770">
    <property type="entry name" value="PRK00509.1"/>
    <property type="match status" value="1"/>
</dbReference>
<dbReference type="PANTHER" id="PTHR11587">
    <property type="entry name" value="ARGININOSUCCINATE SYNTHASE"/>
    <property type="match status" value="1"/>
</dbReference>
<dbReference type="PANTHER" id="PTHR11587:SF2">
    <property type="entry name" value="ARGININOSUCCINATE SYNTHASE"/>
    <property type="match status" value="1"/>
</dbReference>
<dbReference type="Pfam" id="PF20979">
    <property type="entry name" value="Arginosuc_syn_C"/>
    <property type="match status" value="1"/>
</dbReference>
<dbReference type="Pfam" id="PF00764">
    <property type="entry name" value="Arginosuc_synth"/>
    <property type="match status" value="1"/>
</dbReference>
<dbReference type="SUPFAM" id="SSF52402">
    <property type="entry name" value="Adenine nucleotide alpha hydrolases-like"/>
    <property type="match status" value="1"/>
</dbReference>
<dbReference type="SUPFAM" id="SSF69864">
    <property type="entry name" value="Argininosuccinate synthetase, C-terminal domain"/>
    <property type="match status" value="1"/>
</dbReference>
<dbReference type="PROSITE" id="PS00564">
    <property type="entry name" value="ARGININOSUCCIN_SYN_1"/>
    <property type="match status" value="1"/>
</dbReference>
<dbReference type="PROSITE" id="PS00565">
    <property type="entry name" value="ARGININOSUCCIN_SYN_2"/>
    <property type="match status" value="1"/>
</dbReference>
<protein>
    <recommendedName>
        <fullName evidence="1">Argininosuccinate synthase</fullName>
        <ecNumber evidence="1">6.3.4.5</ecNumber>
    </recommendedName>
    <alternativeName>
        <fullName evidence="1">Citrulline--aspartate ligase</fullName>
    </alternativeName>
</protein>
<name>ASSY_AQUAE</name>
<feature type="chain" id="PRO_0000148562" description="Argininosuccinate synthase">
    <location>
        <begin position="1"/>
        <end position="401"/>
    </location>
</feature>
<feature type="binding site" evidence="1">
    <location>
        <begin position="9"/>
        <end position="17"/>
    </location>
    <ligand>
        <name>ATP</name>
        <dbReference type="ChEBI" id="CHEBI:30616"/>
    </ligand>
</feature>
<feature type="binding site" evidence="1">
    <location>
        <position position="35"/>
    </location>
    <ligand>
        <name>ATP</name>
        <dbReference type="ChEBI" id="CHEBI:30616"/>
    </ligand>
</feature>
<feature type="binding site" evidence="1">
    <location>
        <position position="86"/>
    </location>
    <ligand>
        <name>L-citrulline</name>
        <dbReference type="ChEBI" id="CHEBI:57743"/>
    </ligand>
</feature>
<feature type="binding site" evidence="1">
    <location>
        <position position="116"/>
    </location>
    <ligand>
        <name>ATP</name>
        <dbReference type="ChEBI" id="CHEBI:30616"/>
    </ligand>
</feature>
<feature type="binding site" evidence="1">
    <location>
        <position position="118"/>
    </location>
    <ligand>
        <name>L-aspartate</name>
        <dbReference type="ChEBI" id="CHEBI:29991"/>
    </ligand>
</feature>
<feature type="binding site" evidence="1">
    <location>
        <position position="122"/>
    </location>
    <ligand>
        <name>L-aspartate</name>
        <dbReference type="ChEBI" id="CHEBI:29991"/>
    </ligand>
</feature>
<feature type="binding site" evidence="1">
    <location>
        <position position="122"/>
    </location>
    <ligand>
        <name>L-citrulline</name>
        <dbReference type="ChEBI" id="CHEBI:57743"/>
    </ligand>
</feature>
<feature type="binding site" evidence="1">
    <location>
        <position position="123"/>
    </location>
    <ligand>
        <name>L-aspartate</name>
        <dbReference type="ChEBI" id="CHEBI:29991"/>
    </ligand>
</feature>
<feature type="binding site" evidence="1">
    <location>
        <position position="126"/>
    </location>
    <ligand>
        <name>L-citrulline</name>
        <dbReference type="ChEBI" id="CHEBI:57743"/>
    </ligand>
</feature>
<feature type="binding site" evidence="1">
    <location>
        <position position="175"/>
    </location>
    <ligand>
        <name>L-citrulline</name>
        <dbReference type="ChEBI" id="CHEBI:57743"/>
    </ligand>
</feature>
<feature type="binding site" evidence="1">
    <location>
        <position position="184"/>
    </location>
    <ligand>
        <name>L-citrulline</name>
        <dbReference type="ChEBI" id="CHEBI:57743"/>
    </ligand>
</feature>
<feature type="binding site" evidence="1">
    <location>
        <position position="261"/>
    </location>
    <ligand>
        <name>L-citrulline</name>
        <dbReference type="ChEBI" id="CHEBI:57743"/>
    </ligand>
</feature>
<feature type="binding site" evidence="1">
    <location>
        <position position="273"/>
    </location>
    <ligand>
        <name>L-citrulline</name>
        <dbReference type="ChEBI" id="CHEBI:57743"/>
    </ligand>
</feature>